<evidence type="ECO:0000255" key="1"/>
<evidence type="ECO:0000305" key="2"/>
<proteinExistence type="predicted"/>
<organism>
    <name type="scientific">Pseudoalteromonas phage PM2</name>
    <name type="common">Bacteriophage PM2</name>
    <dbReference type="NCBI Taxonomy" id="2905728"/>
    <lineage>
        <taxon>Viruses</taxon>
        <taxon>Varidnaviria</taxon>
        <taxon>Bamfordvirae</taxon>
        <taxon>Preplasmiviricota</taxon>
        <taxon>Tectiliviricetes</taxon>
        <taxon>Vinavirales</taxon>
        <taxon>Corticoviridae</taxon>
        <taxon>Corticovirus</taxon>
        <taxon>Corticovirus PM2</taxon>
    </lineage>
</organism>
<protein>
    <recommendedName>
        <fullName>Uncharacterized protein Gp-k</fullName>
    </recommendedName>
</protein>
<accession>Q9XJR0</accession>
<organismHost>
    <name type="scientific">Pseudoalteromonas espejiana</name>
    <dbReference type="NCBI Taxonomy" id="28107"/>
</organismHost>
<feature type="chain" id="PRO_0000339917" description="Uncharacterized protein Gp-k">
    <location>
        <begin position="1"/>
        <end position="53"/>
    </location>
</feature>
<feature type="transmembrane region" description="Helical" evidence="1">
    <location>
        <begin position="4"/>
        <end position="23"/>
    </location>
</feature>
<feature type="coiled-coil region" evidence="1">
    <location>
        <begin position="24"/>
        <end position="50"/>
    </location>
</feature>
<dbReference type="EMBL" id="AF155037">
    <property type="protein sequence ID" value="AAD43557.1"/>
    <property type="molecule type" value="Genomic_DNA"/>
</dbReference>
<dbReference type="RefSeq" id="NP_049911.1">
    <property type="nucleotide sequence ID" value="NC_000867.1"/>
</dbReference>
<dbReference type="SMR" id="Q9XJR0"/>
<dbReference type="TCDB" id="1.E.30.1.1">
    <property type="family name" value="the vibrio holin (vibrio holin) family"/>
</dbReference>
<dbReference type="KEGG" id="vg:1262029"/>
<dbReference type="Proteomes" id="UP000002136">
    <property type="component" value="Genome"/>
</dbReference>
<dbReference type="GO" id="GO:0033644">
    <property type="term" value="C:host cell membrane"/>
    <property type="evidence" value="ECO:0007669"/>
    <property type="project" value="UniProtKB-SubCell"/>
</dbReference>
<dbReference type="GO" id="GO:0016020">
    <property type="term" value="C:membrane"/>
    <property type="evidence" value="ECO:0007669"/>
    <property type="project" value="UniProtKB-KW"/>
</dbReference>
<keyword id="KW-0175">Coiled coil</keyword>
<keyword id="KW-1043">Host membrane</keyword>
<keyword id="KW-0472">Membrane</keyword>
<keyword id="KW-1185">Reference proteome</keyword>
<keyword id="KW-0812">Transmembrane</keyword>
<keyword id="KW-1133">Transmembrane helix</keyword>
<comment type="subcellular location">
    <subcellularLocation>
        <location evidence="2">Host membrane</location>
        <topology evidence="2">Single-pass membrane protein</topology>
    </subcellularLocation>
</comment>
<reference key="1">
    <citation type="journal article" date="1999" name="Virology">
        <title>The complete genome sequence of PM2, the first lipid-containing bacterial virus to be isolated.</title>
        <authorList>
            <person name="Maennistoe R.H."/>
            <person name="Kivelae H.M."/>
            <person name="Paulin L."/>
            <person name="Bamford D.H."/>
            <person name="Bamford J.K."/>
        </authorList>
    </citation>
    <scope>NUCLEOTIDE SEQUENCE [GENOMIC DNA]</scope>
</reference>
<name>GPK_BPPM2</name>
<sequence>MTESTLIIIASNVVTVFVSVAVNRTDISWLKQRLISLEERINKLGEKHVFNVG</sequence>
<gene>
    <name type="ORF">k</name>
</gene>